<reference key="1">
    <citation type="journal article" date="2000" name="Clin. Diagn. Lab. Immunol.">
        <title>Molecular cloning and nucleotide sequence analysis of a novel human papillomavirus (type 82) associated with vaginal intraepithelial neoplasia.</title>
        <authorList>
            <person name="Kino N."/>
            <person name="Sata T."/>
            <person name="Sato Y."/>
            <person name="Sugase M."/>
            <person name="Matsukura T."/>
        </authorList>
    </citation>
    <scope>NUCLEOTIDE SEQUENCE [GENOMIC DNA]</scope>
</reference>
<reference key="2">
    <citation type="journal article" date="2002" name="Rev. Med. Virol.">
        <title>Interactions of SV40 large T antigen and other viral proteins with retinoblastoma tumour suppressor.</title>
        <authorList>
            <person name="Lee C."/>
            <person name="Cho Y."/>
        </authorList>
    </citation>
    <scope>REVIEW</scope>
</reference>
<protein>
    <recommendedName>
        <fullName evidence="1">Protein E7</fullName>
    </recommendedName>
</protein>
<gene>
    <name evidence="1" type="primary">E7</name>
</gene>
<name>VE7_HPV69</name>
<keyword id="KW-0010">Activator</keyword>
<keyword id="KW-0238">DNA-binding</keyword>
<keyword id="KW-0244">Early protein</keyword>
<keyword id="KW-1078">G1/S host cell cycle checkpoint dysregulation by virus</keyword>
<keyword id="KW-1035">Host cytoplasm</keyword>
<keyword id="KW-1048">Host nucleus</keyword>
<keyword id="KW-0945">Host-virus interaction</keyword>
<keyword id="KW-1090">Inhibition of host innate immune response by virus</keyword>
<keyword id="KW-1114">Inhibition of host interferon signaling pathway by virus</keyword>
<keyword id="KW-0922">Interferon antiviral system evasion</keyword>
<keyword id="KW-0479">Metal-binding</keyword>
<keyword id="KW-1121">Modulation of host cell cycle by virus</keyword>
<keyword id="KW-0553">Oncogene</keyword>
<keyword id="KW-0804">Transcription</keyword>
<keyword id="KW-0805">Transcription regulation</keyword>
<keyword id="KW-0899">Viral immunoevasion</keyword>
<keyword id="KW-0862">Zinc</keyword>
<keyword id="KW-0863">Zinc-finger</keyword>
<evidence type="ECO:0000255" key="1">
    <source>
        <dbReference type="HAMAP-Rule" id="MF_04004"/>
    </source>
</evidence>
<dbReference type="EMBL" id="AB027020">
    <property type="protein sequence ID" value="BAA90728.1"/>
    <property type="molecule type" value="Genomic_DNA"/>
</dbReference>
<dbReference type="SMR" id="Q9JH50"/>
<dbReference type="Proteomes" id="UP000007674">
    <property type="component" value="Genome"/>
</dbReference>
<dbReference type="GO" id="GO:0030430">
    <property type="term" value="C:host cell cytoplasm"/>
    <property type="evidence" value="ECO:0007669"/>
    <property type="project" value="UniProtKB-SubCell"/>
</dbReference>
<dbReference type="GO" id="GO:0042025">
    <property type="term" value="C:host cell nucleus"/>
    <property type="evidence" value="ECO:0007669"/>
    <property type="project" value="UniProtKB-SubCell"/>
</dbReference>
<dbReference type="GO" id="GO:0003677">
    <property type="term" value="F:DNA binding"/>
    <property type="evidence" value="ECO:0007669"/>
    <property type="project" value="UniProtKB-UniRule"/>
</dbReference>
<dbReference type="GO" id="GO:0003700">
    <property type="term" value="F:DNA-binding transcription factor activity"/>
    <property type="evidence" value="ECO:0007669"/>
    <property type="project" value="UniProtKB-UniRule"/>
</dbReference>
<dbReference type="GO" id="GO:0019904">
    <property type="term" value="F:protein domain specific binding"/>
    <property type="evidence" value="ECO:0007669"/>
    <property type="project" value="UniProtKB-UniRule"/>
</dbReference>
<dbReference type="GO" id="GO:0008270">
    <property type="term" value="F:zinc ion binding"/>
    <property type="evidence" value="ECO:0007669"/>
    <property type="project" value="UniProtKB-KW"/>
</dbReference>
<dbReference type="GO" id="GO:0006351">
    <property type="term" value="P:DNA-templated transcription"/>
    <property type="evidence" value="ECO:0007669"/>
    <property type="project" value="UniProtKB-UniRule"/>
</dbReference>
<dbReference type="GO" id="GO:0039645">
    <property type="term" value="P:symbiont-mediated perturbation of host cell cycle G1/S transition checkpoint"/>
    <property type="evidence" value="ECO:0007669"/>
    <property type="project" value="UniProtKB-UniRule"/>
</dbReference>
<dbReference type="GO" id="GO:0052170">
    <property type="term" value="P:symbiont-mediated suppression of host innate immune response"/>
    <property type="evidence" value="ECO:0007669"/>
    <property type="project" value="UniProtKB-KW"/>
</dbReference>
<dbReference type="GO" id="GO:0039502">
    <property type="term" value="P:symbiont-mediated suppression of host type I interferon-mediated signaling pathway"/>
    <property type="evidence" value="ECO:0007669"/>
    <property type="project" value="UniProtKB-UniRule"/>
</dbReference>
<dbReference type="Gene3D" id="3.30.160.330">
    <property type="match status" value="1"/>
</dbReference>
<dbReference type="HAMAP" id="MF_04004">
    <property type="entry name" value="PPV_E7"/>
    <property type="match status" value="1"/>
</dbReference>
<dbReference type="InterPro" id="IPR000148">
    <property type="entry name" value="Papilloma_E7"/>
</dbReference>
<dbReference type="Pfam" id="PF00527">
    <property type="entry name" value="E7"/>
    <property type="match status" value="1"/>
</dbReference>
<dbReference type="PIRSF" id="PIRSF003407">
    <property type="entry name" value="Papvi_E7"/>
    <property type="match status" value="1"/>
</dbReference>
<dbReference type="SUPFAM" id="SSF161234">
    <property type="entry name" value="E7 C-terminal domain-like"/>
    <property type="match status" value="1"/>
</dbReference>
<organismHost>
    <name type="scientific">Homo sapiens</name>
    <name type="common">Human</name>
    <dbReference type="NCBI Taxonomy" id="9606"/>
</organismHost>
<comment type="function">
    <text evidence="1">Plays a role in viral genome replication by driving entry of quiescent cells into the cell cycle. Stimulation of progression from G1 to S phase allows the virus to efficiently use the cellular DNA replicating machinery to achieve viral genome replication. E7 protein has both transforming and trans-activating activities. Induces the disassembly of the E2F1 transcription factor from RB1, with subsequent transcriptional activation of E2F1-regulated S-phase genes. Interferes with host histone deacetylation mediated by HDAC1 and HDAC2, leading to transcription activation. Also plays a role in the inhibition of both antiviral and antiproliferative functions of host interferon alpha. Interaction with host TMEM173/STING impairs the ability of TMEM173/STING to sense cytosolic DNA and promote the production of type I interferon (IFN-alpha and IFN-beta).</text>
</comment>
<comment type="subunit">
    <text evidence="1">Homodimer. Homooligomer. Interacts with host RB1; this interaction induces dissociation of RB1-E2F1 complex thereby disrupting RB1 activity. Interacts with host EP300; this interaction represses EP300 transcriptional activity. Interacts with protein E2; this interaction inhibits E7 oncogenic activity. Interacts with host TMEM173/STING; this interaction impairs the ability of TMEM173/STING to sense cytosolic DNA and promote the production of type I interferon (IFN-alpha and IFN-beta).</text>
</comment>
<comment type="subcellular location">
    <subcellularLocation>
        <location evidence="1">Host cytoplasm</location>
    </subcellularLocation>
    <subcellularLocation>
        <location evidence="1">Host nucleus</location>
    </subcellularLocation>
    <text evidence="1">Predominantly found in the host nucleus.</text>
</comment>
<comment type="domain">
    <text evidence="1">The E7 terminal domain is an intrinsically disordered domain, whose flexibility and conformational transitions confer target adaptability to the oncoprotein. It allows adaptation to a variety of protein targets and exposes the PEST degradation sequence that regulates its turnover in the cell.</text>
</comment>
<comment type="PTM">
    <text evidence="1">Highly phosphorylated.</text>
</comment>
<comment type="similarity">
    <text evidence="1">Belongs to the papillomaviridae E7 protein family.</text>
</comment>
<organism>
    <name type="scientific">Human papillomavirus 69</name>
    <dbReference type="NCBI Taxonomy" id="37121"/>
    <lineage>
        <taxon>Viruses</taxon>
        <taxon>Monodnaviria</taxon>
        <taxon>Shotokuvirae</taxon>
        <taxon>Cossaviricota</taxon>
        <taxon>Papovaviricetes</taxon>
        <taxon>Zurhausenvirales</taxon>
        <taxon>Papillomaviridae</taxon>
        <taxon>Firstpapillomavirinae</taxon>
        <taxon>Alphapapillomavirus</taxon>
        <taxon>Alphapapillomavirus 5</taxon>
    </lineage>
</organism>
<sequence>MHGDTINIQDVILDLVPQPEIDLQCYEQLDYEQFDSSEEDETDNVRNQQARQAEQEACYRIEAECCVCNSIVQLAVLSSRQNVRAVEQLLMGDVSLVCHQCATY</sequence>
<proteinExistence type="inferred from homology"/>
<accession>Q9JH50</accession>
<feature type="chain" id="PRO_0000133461" description="Protein E7">
    <location>
        <begin position="1"/>
        <end position="104"/>
    </location>
</feature>
<feature type="zinc finger region" evidence="1">
    <location>
        <begin position="65"/>
        <end position="101"/>
    </location>
</feature>
<feature type="region of interest" description="E7 terminal domain" evidence="1">
    <location>
        <begin position="1"/>
        <end position="47"/>
    </location>
</feature>
<feature type="short sequence motif" description="LXCXE motif; interaction with host RB1 and TMEM173/STING" evidence="1">
    <location>
        <begin position="23"/>
        <end position="27"/>
    </location>
</feature>
<feature type="short sequence motif" description="Nuclear export signal" evidence="1">
    <location>
        <begin position="83"/>
        <end position="91"/>
    </location>
</feature>